<proteinExistence type="inferred from homology"/>
<sequence>MDDFRKYATKHLGMNAMVLDDVIKSQAGYLNPYILEERQLNVTQLDVFSRLMMDRIIFLGTQIDDYTANTLQAQLLYLDSVDPGKDISIYINSPGGSVYAGLGIYDTMQFISSDVATICTGMAASMASVLLVAGAKGKRSALPHSRVMIHQPMGGAQGQASDIEITAREIQKLKKELYTIIADHSGTSFDKVWADSDRDYWMTAQEAKEYGMIDEVLIKK</sequence>
<dbReference type="EC" id="3.4.21.92" evidence="1"/>
<dbReference type="EMBL" id="AP006841">
    <property type="protein sequence ID" value="BAD50820.1"/>
    <property type="molecule type" value="Genomic_DNA"/>
</dbReference>
<dbReference type="RefSeq" id="WP_005782306.1">
    <property type="nucleotide sequence ID" value="NZ_UYXF01000013.1"/>
</dbReference>
<dbReference type="RefSeq" id="YP_101354.1">
    <property type="nucleotide sequence ID" value="NC_006347.1"/>
</dbReference>
<dbReference type="SMR" id="Q64NW2"/>
<dbReference type="STRING" id="295405.BF4078"/>
<dbReference type="MEROPS" id="S14.001"/>
<dbReference type="GeneID" id="93105213"/>
<dbReference type="KEGG" id="bfr:BF4078"/>
<dbReference type="PATRIC" id="fig|295405.11.peg.3926"/>
<dbReference type="HOGENOM" id="CLU_058707_3_1_10"/>
<dbReference type="OrthoDB" id="9802800at2"/>
<dbReference type="Proteomes" id="UP000002197">
    <property type="component" value="Chromosome"/>
</dbReference>
<dbReference type="GO" id="GO:0005737">
    <property type="term" value="C:cytoplasm"/>
    <property type="evidence" value="ECO:0007669"/>
    <property type="project" value="UniProtKB-SubCell"/>
</dbReference>
<dbReference type="GO" id="GO:0009368">
    <property type="term" value="C:endopeptidase Clp complex"/>
    <property type="evidence" value="ECO:0007669"/>
    <property type="project" value="TreeGrafter"/>
</dbReference>
<dbReference type="GO" id="GO:0004176">
    <property type="term" value="F:ATP-dependent peptidase activity"/>
    <property type="evidence" value="ECO:0007669"/>
    <property type="project" value="InterPro"/>
</dbReference>
<dbReference type="GO" id="GO:0051117">
    <property type="term" value="F:ATPase binding"/>
    <property type="evidence" value="ECO:0007669"/>
    <property type="project" value="TreeGrafter"/>
</dbReference>
<dbReference type="GO" id="GO:0004252">
    <property type="term" value="F:serine-type endopeptidase activity"/>
    <property type="evidence" value="ECO:0007669"/>
    <property type="project" value="UniProtKB-UniRule"/>
</dbReference>
<dbReference type="GO" id="GO:0006515">
    <property type="term" value="P:protein quality control for misfolded or incompletely synthesized proteins"/>
    <property type="evidence" value="ECO:0007669"/>
    <property type="project" value="TreeGrafter"/>
</dbReference>
<dbReference type="CDD" id="cd07017">
    <property type="entry name" value="S14_ClpP_2"/>
    <property type="match status" value="1"/>
</dbReference>
<dbReference type="FunFam" id="3.90.226.10:FF:000002">
    <property type="entry name" value="ATP-dependent Clp protease proteolytic subunit"/>
    <property type="match status" value="1"/>
</dbReference>
<dbReference type="Gene3D" id="3.90.226.10">
    <property type="entry name" value="2-enoyl-CoA Hydratase, Chain A, domain 1"/>
    <property type="match status" value="1"/>
</dbReference>
<dbReference type="HAMAP" id="MF_00444">
    <property type="entry name" value="ClpP"/>
    <property type="match status" value="1"/>
</dbReference>
<dbReference type="InterPro" id="IPR001907">
    <property type="entry name" value="ClpP"/>
</dbReference>
<dbReference type="InterPro" id="IPR029045">
    <property type="entry name" value="ClpP/crotonase-like_dom_sf"/>
</dbReference>
<dbReference type="InterPro" id="IPR023562">
    <property type="entry name" value="ClpP/TepA"/>
</dbReference>
<dbReference type="InterPro" id="IPR033135">
    <property type="entry name" value="ClpP_His_AS"/>
</dbReference>
<dbReference type="NCBIfam" id="NF001368">
    <property type="entry name" value="PRK00277.1"/>
    <property type="match status" value="1"/>
</dbReference>
<dbReference type="NCBIfam" id="NF009205">
    <property type="entry name" value="PRK12553.1"/>
    <property type="match status" value="1"/>
</dbReference>
<dbReference type="NCBIfam" id="NF011091">
    <property type="entry name" value="PRK14514.1"/>
    <property type="match status" value="1"/>
</dbReference>
<dbReference type="PANTHER" id="PTHR10381">
    <property type="entry name" value="ATP-DEPENDENT CLP PROTEASE PROTEOLYTIC SUBUNIT"/>
    <property type="match status" value="1"/>
</dbReference>
<dbReference type="PANTHER" id="PTHR10381:SF70">
    <property type="entry name" value="ATP-DEPENDENT CLP PROTEASE PROTEOLYTIC SUBUNIT"/>
    <property type="match status" value="1"/>
</dbReference>
<dbReference type="Pfam" id="PF00574">
    <property type="entry name" value="CLP_protease"/>
    <property type="match status" value="1"/>
</dbReference>
<dbReference type="PRINTS" id="PR00127">
    <property type="entry name" value="CLPPROTEASEP"/>
</dbReference>
<dbReference type="SUPFAM" id="SSF52096">
    <property type="entry name" value="ClpP/crotonase"/>
    <property type="match status" value="1"/>
</dbReference>
<dbReference type="PROSITE" id="PS00382">
    <property type="entry name" value="CLP_PROTEASE_HIS"/>
    <property type="match status" value="1"/>
</dbReference>
<comment type="function">
    <text evidence="1">Cleaves peptides in various proteins in a process that requires ATP hydrolysis. Has a chymotrypsin-like activity. Plays a major role in the degradation of misfolded proteins.</text>
</comment>
<comment type="catalytic activity">
    <reaction evidence="1">
        <text>Hydrolysis of proteins to small peptides in the presence of ATP and magnesium. alpha-casein is the usual test substrate. In the absence of ATP, only oligopeptides shorter than five residues are hydrolyzed (such as succinyl-Leu-Tyr-|-NHMec, and Leu-Tyr-Leu-|-Tyr-Trp, in which cleavage of the -Tyr-|-Leu- and -Tyr-|-Trp bonds also occurs).</text>
        <dbReference type="EC" id="3.4.21.92"/>
    </reaction>
</comment>
<comment type="subunit">
    <text evidence="1">Fourteen ClpP subunits assemble into 2 heptameric rings which stack back to back to give a disk-like structure with a central cavity, resembling the structure of eukaryotic proteasomes.</text>
</comment>
<comment type="subcellular location">
    <subcellularLocation>
        <location evidence="1">Cytoplasm</location>
    </subcellularLocation>
</comment>
<comment type="similarity">
    <text evidence="1">Belongs to the peptidase S14 family.</text>
</comment>
<protein>
    <recommendedName>
        <fullName evidence="1">ATP-dependent Clp protease proteolytic subunit</fullName>
        <ecNumber evidence="1">3.4.21.92</ecNumber>
    </recommendedName>
    <alternativeName>
        <fullName evidence="1">Endopeptidase Clp</fullName>
    </alternativeName>
</protein>
<reference key="1">
    <citation type="journal article" date="2004" name="Proc. Natl. Acad. Sci. U.S.A.">
        <title>Genomic analysis of Bacteroides fragilis reveals extensive DNA inversions regulating cell surface adaptation.</title>
        <authorList>
            <person name="Kuwahara T."/>
            <person name="Yamashita A."/>
            <person name="Hirakawa H."/>
            <person name="Nakayama H."/>
            <person name="Toh H."/>
            <person name="Okada N."/>
            <person name="Kuhara S."/>
            <person name="Hattori M."/>
            <person name="Hayashi T."/>
            <person name="Ohnishi Y."/>
        </authorList>
    </citation>
    <scope>NUCLEOTIDE SEQUENCE [LARGE SCALE GENOMIC DNA]</scope>
    <source>
        <strain>YCH46</strain>
    </source>
</reference>
<evidence type="ECO:0000255" key="1">
    <source>
        <dbReference type="HAMAP-Rule" id="MF_00444"/>
    </source>
</evidence>
<gene>
    <name evidence="1" type="primary">clpP</name>
    <name type="ordered locus">BF4078</name>
</gene>
<feature type="chain" id="PRO_0000179492" description="ATP-dependent Clp protease proteolytic subunit">
    <location>
        <begin position="1"/>
        <end position="220"/>
    </location>
</feature>
<feature type="active site" description="Nucleophile" evidence="1">
    <location>
        <position position="125"/>
    </location>
</feature>
<feature type="active site" evidence="1">
    <location>
        <position position="150"/>
    </location>
</feature>
<keyword id="KW-0963">Cytoplasm</keyword>
<keyword id="KW-0378">Hydrolase</keyword>
<keyword id="KW-0645">Protease</keyword>
<keyword id="KW-0720">Serine protease</keyword>
<organism>
    <name type="scientific">Bacteroides fragilis (strain YCH46)</name>
    <dbReference type="NCBI Taxonomy" id="295405"/>
    <lineage>
        <taxon>Bacteria</taxon>
        <taxon>Pseudomonadati</taxon>
        <taxon>Bacteroidota</taxon>
        <taxon>Bacteroidia</taxon>
        <taxon>Bacteroidales</taxon>
        <taxon>Bacteroidaceae</taxon>
        <taxon>Bacteroides</taxon>
    </lineage>
</organism>
<name>CLPP_BACFR</name>
<accession>Q64NW2</accession>